<proteinExistence type="evidence at protein level"/>
<evidence type="ECO:0000250" key="1"/>
<evidence type="ECO:0000255" key="2"/>
<evidence type="ECO:0000269" key="3">
    <source>
    </source>
</evidence>
<evidence type="ECO:0000303" key="4">
    <source>
    </source>
</evidence>
<evidence type="ECO:0000303" key="5">
    <source ref="5"/>
</evidence>
<evidence type="ECO:0000305" key="6"/>
<evidence type="ECO:0007829" key="7">
    <source>
        <dbReference type="PDB" id="5JJT"/>
    </source>
</evidence>
<evidence type="ECO:0007829" key="8">
    <source>
        <dbReference type="PDB" id="7OBE"/>
    </source>
</evidence>
<feature type="chain" id="PRO_0000308988" description="Serine/threonine-protein phosphatase 5">
    <location>
        <begin position="1"/>
        <end position="538"/>
    </location>
</feature>
<feature type="transmembrane region" description="Helical" evidence="2">
    <location>
        <begin position="163"/>
        <end position="183"/>
    </location>
</feature>
<feature type="transmembrane region" description="Helical" evidence="2">
    <location>
        <begin position="185"/>
        <end position="205"/>
    </location>
</feature>
<feature type="repeat" description="TPR 1">
    <location>
        <begin position="13"/>
        <end position="46"/>
    </location>
</feature>
<feature type="repeat" description="TPR 2">
    <location>
        <begin position="48"/>
        <end position="80"/>
    </location>
</feature>
<feature type="repeat" description="TPR 3">
    <location>
        <begin position="81"/>
        <end position="114"/>
    </location>
</feature>
<feature type="active site" description="Proton donor" evidence="1">
    <location>
        <position position="344"/>
    </location>
</feature>
<feature type="binding site" evidence="1">
    <location>
        <position position="282"/>
    </location>
    <ligand>
        <name>Mn(2+)</name>
        <dbReference type="ChEBI" id="CHEBI:29035"/>
        <label>1</label>
    </ligand>
</feature>
<feature type="binding site" evidence="1">
    <location>
        <position position="284"/>
    </location>
    <ligand>
        <name>Mn(2+)</name>
        <dbReference type="ChEBI" id="CHEBI:29035"/>
        <label>1</label>
    </ligand>
</feature>
<feature type="binding site" evidence="1">
    <location>
        <position position="311"/>
    </location>
    <ligand>
        <name>Mn(2+)</name>
        <dbReference type="ChEBI" id="CHEBI:29035"/>
        <label>1</label>
    </ligand>
</feature>
<feature type="binding site" evidence="1">
    <location>
        <position position="311"/>
    </location>
    <ligand>
        <name>Mn(2+)</name>
        <dbReference type="ChEBI" id="CHEBI:29035"/>
        <label>2</label>
    </ligand>
</feature>
<feature type="binding site" evidence="1">
    <location>
        <position position="343"/>
    </location>
    <ligand>
        <name>Mn(2+)</name>
        <dbReference type="ChEBI" id="CHEBI:29035"/>
        <label>2</label>
    </ligand>
</feature>
<feature type="binding site" evidence="1">
    <location>
        <position position="392"/>
    </location>
    <ligand>
        <name>Mn(2+)</name>
        <dbReference type="ChEBI" id="CHEBI:29035"/>
        <label>2</label>
    </ligand>
</feature>
<feature type="binding site" evidence="1">
    <location>
        <position position="467"/>
    </location>
    <ligand>
        <name>Mn(2+)</name>
        <dbReference type="ChEBI" id="CHEBI:29035"/>
        <label>2</label>
    </ligand>
</feature>
<feature type="splice variant" id="VSP_029087" description="In isoform 2." evidence="4 5">
    <original>GNKPRSSSMPTKTALAAVVAAVMVVAVRGFATTEILMVLVSVVLGTFWWGSFSGK</original>
    <variation>E</variation>
    <location>
        <begin position="157"/>
        <end position="211"/>
    </location>
</feature>
<feature type="helix" evidence="7">
    <location>
        <begin position="12"/>
        <end position="25"/>
    </location>
</feature>
<feature type="helix" evidence="7">
    <location>
        <begin position="29"/>
        <end position="42"/>
    </location>
</feature>
<feature type="helix" evidence="7">
    <location>
        <begin position="47"/>
        <end position="59"/>
    </location>
</feature>
<feature type="helix" evidence="7">
    <location>
        <begin position="63"/>
        <end position="76"/>
    </location>
</feature>
<feature type="helix" evidence="7">
    <location>
        <begin position="81"/>
        <end position="93"/>
    </location>
</feature>
<feature type="helix" evidence="7">
    <location>
        <begin position="97"/>
        <end position="110"/>
    </location>
</feature>
<feature type="helix" evidence="7">
    <location>
        <begin position="118"/>
        <end position="136"/>
    </location>
</feature>
<feature type="helix" evidence="7">
    <location>
        <begin position="141"/>
        <end position="143"/>
    </location>
</feature>
<feature type="helix" evidence="7">
    <location>
        <begin position="147"/>
        <end position="149"/>
    </location>
</feature>
<feature type="helix" evidence="7">
    <location>
        <begin position="153"/>
        <end position="155"/>
    </location>
</feature>
<feature type="strand" evidence="7">
    <location>
        <begin position="223"/>
        <end position="225"/>
    </location>
</feature>
<feature type="helix" evidence="7">
    <location>
        <begin position="228"/>
        <end position="239"/>
    </location>
</feature>
<feature type="helix" evidence="7">
    <location>
        <begin position="246"/>
        <end position="261"/>
    </location>
</feature>
<feature type="strand" evidence="7">
    <location>
        <begin position="265"/>
        <end position="269"/>
    </location>
</feature>
<feature type="strand" evidence="7">
    <location>
        <begin position="276"/>
        <end position="280"/>
    </location>
</feature>
<feature type="helix" evidence="7">
    <location>
        <begin position="287"/>
        <end position="297"/>
    </location>
</feature>
<feature type="strand" evidence="8">
    <location>
        <begin position="302"/>
        <end position="304"/>
    </location>
</feature>
<feature type="strand" evidence="7">
    <location>
        <begin position="306"/>
        <end position="310"/>
    </location>
</feature>
<feature type="strand" evidence="7">
    <location>
        <begin position="313"/>
        <end position="317"/>
    </location>
</feature>
<feature type="helix" evidence="7">
    <location>
        <begin position="319"/>
        <end position="332"/>
    </location>
</feature>
<feature type="helix" evidence="7">
    <location>
        <begin position="334"/>
        <end position="336"/>
    </location>
</feature>
<feature type="strand" evidence="7">
    <location>
        <begin position="337"/>
        <end position="340"/>
    </location>
</feature>
<feature type="helix" evidence="7">
    <location>
        <begin position="347"/>
        <end position="353"/>
    </location>
</feature>
<feature type="helix" evidence="7">
    <location>
        <begin position="355"/>
        <end position="362"/>
    </location>
</feature>
<feature type="helix" evidence="7">
    <location>
        <begin position="365"/>
        <end position="375"/>
    </location>
</feature>
<feature type="strand" evidence="7">
    <location>
        <begin position="380"/>
        <end position="384"/>
    </location>
</feature>
<feature type="turn" evidence="7">
    <location>
        <begin position="385"/>
        <end position="387"/>
    </location>
</feature>
<feature type="strand" evidence="7">
    <location>
        <begin position="388"/>
        <end position="393"/>
    </location>
</feature>
<feature type="strand" evidence="7">
    <location>
        <begin position="397"/>
        <end position="399"/>
    </location>
</feature>
<feature type="helix" evidence="7">
    <location>
        <begin position="403"/>
        <end position="407"/>
    </location>
</feature>
<feature type="strand" evidence="7">
    <location>
        <begin position="417"/>
        <end position="419"/>
    </location>
</feature>
<feature type="helix" evidence="7">
    <location>
        <begin position="420"/>
        <end position="426"/>
    </location>
</feature>
<feature type="strand" evidence="7">
    <location>
        <begin position="431"/>
        <end position="437"/>
    </location>
</feature>
<feature type="strand" evidence="7">
    <location>
        <begin position="441"/>
        <end position="446"/>
    </location>
</feature>
<feature type="helix" evidence="7">
    <location>
        <begin position="448"/>
        <end position="457"/>
    </location>
</feature>
<feature type="strand" evidence="7">
    <location>
        <begin position="461"/>
        <end position="465"/>
    </location>
</feature>
<feature type="strand" evidence="7">
    <location>
        <begin position="473"/>
        <end position="477"/>
    </location>
</feature>
<feature type="turn" evidence="7">
    <location>
        <begin position="478"/>
        <end position="481"/>
    </location>
</feature>
<feature type="strand" evidence="7">
    <location>
        <begin position="482"/>
        <end position="485"/>
    </location>
</feature>
<feature type="helix" evidence="7">
    <location>
        <begin position="491"/>
        <end position="493"/>
    </location>
</feature>
<feature type="strand" evidence="7">
    <location>
        <begin position="499"/>
        <end position="505"/>
    </location>
</feature>
<feature type="turn" evidence="7">
    <location>
        <begin position="506"/>
        <end position="508"/>
    </location>
</feature>
<feature type="strand" evidence="7">
    <location>
        <begin position="511"/>
        <end position="516"/>
    </location>
</feature>
<feature type="turn" evidence="7">
    <location>
        <begin position="526"/>
        <end position="529"/>
    </location>
</feature>
<feature type="helix" evidence="7">
    <location>
        <begin position="532"/>
        <end position="535"/>
    </location>
</feature>
<name>PPP5_ARATH</name>
<dbReference type="EC" id="3.1.3.16"/>
<dbReference type="EMBL" id="AY182779">
    <property type="protein sequence ID" value="AAO26216.1"/>
    <property type="molecule type" value="mRNA"/>
</dbReference>
<dbReference type="EMBL" id="AC006931">
    <property type="protein sequence ID" value="AAD21727.2"/>
    <property type="molecule type" value="Genomic_DNA"/>
</dbReference>
<dbReference type="EMBL" id="CP002685">
    <property type="protein sequence ID" value="AEC10171.1"/>
    <property type="molecule type" value="Genomic_DNA"/>
</dbReference>
<dbReference type="EMBL" id="CP002685">
    <property type="protein sequence ID" value="AEC10172.1"/>
    <property type="molecule type" value="Genomic_DNA"/>
</dbReference>
<dbReference type="EMBL" id="CP002685">
    <property type="protein sequence ID" value="ANM61627.1"/>
    <property type="molecule type" value="Genomic_DNA"/>
</dbReference>
<dbReference type="EMBL" id="CP002685">
    <property type="protein sequence ID" value="ANM61628.1"/>
    <property type="molecule type" value="Genomic_DNA"/>
</dbReference>
<dbReference type="EMBL" id="AF419574">
    <property type="protein sequence ID" value="AAL31906.1"/>
    <property type="molecule type" value="mRNA"/>
</dbReference>
<dbReference type="EMBL" id="AY080674">
    <property type="protein sequence ID" value="AAL86350.1"/>
    <property type="molecule type" value="mRNA"/>
</dbReference>
<dbReference type="EMBL" id="BT010180">
    <property type="protein sequence ID" value="AAQ22649.1"/>
    <property type="molecule type" value="mRNA"/>
</dbReference>
<dbReference type="EMBL" id="AK221789">
    <property type="protein sequence ID" value="BAD93924.1"/>
    <property type="molecule type" value="mRNA"/>
</dbReference>
<dbReference type="PIR" id="E84858">
    <property type="entry name" value="E84858"/>
</dbReference>
<dbReference type="RefSeq" id="NP_001031534.1">
    <molecule id="Q84XU2-1"/>
    <property type="nucleotide sequence ID" value="NM_001036457.3"/>
</dbReference>
<dbReference type="RefSeq" id="NP_001323832.1">
    <molecule id="Q84XU2-2"/>
    <property type="nucleotide sequence ID" value="NM_001336995.1"/>
</dbReference>
<dbReference type="RefSeq" id="NP_001323833.1">
    <molecule id="Q84XU2-2"/>
    <property type="nucleotide sequence ID" value="NM_001336996.1"/>
</dbReference>
<dbReference type="RefSeq" id="NP_565985.1">
    <molecule id="Q84XU2-2"/>
    <property type="nucleotide sequence ID" value="NM_129842.4"/>
</dbReference>
<dbReference type="PDB" id="5JJT">
    <property type="method" value="X-ray"/>
    <property type="resolution" value="2.10 A"/>
    <property type="chains" value="A/B=5-537"/>
</dbReference>
<dbReference type="PDB" id="7OBE">
    <property type="method" value="X-ray"/>
    <property type="resolution" value="3.00 A"/>
    <property type="chains" value="A/B=1-484"/>
</dbReference>
<dbReference type="PDBsum" id="5JJT"/>
<dbReference type="PDBsum" id="7OBE"/>
<dbReference type="SMR" id="Q84XU2"/>
<dbReference type="BioGRID" id="4218">
    <property type="interactions" value="7"/>
</dbReference>
<dbReference type="FunCoup" id="Q84XU2">
    <property type="interactions" value="5363"/>
</dbReference>
<dbReference type="IntAct" id="Q84XU2">
    <property type="interactions" value="3"/>
</dbReference>
<dbReference type="MINT" id="Q84XU2"/>
<dbReference type="STRING" id="3702.Q84XU2"/>
<dbReference type="iPTMnet" id="Q84XU2"/>
<dbReference type="PaxDb" id="3702-AT2G42810.2"/>
<dbReference type="ProteomicsDB" id="234699">
    <molecule id="Q84XU2-1"/>
</dbReference>
<dbReference type="EnsemblPlants" id="AT2G42810.1">
    <molecule id="Q84XU2-2"/>
    <property type="protein sequence ID" value="AT2G42810.1"/>
    <property type="gene ID" value="AT2G42810"/>
</dbReference>
<dbReference type="EnsemblPlants" id="AT2G42810.2">
    <molecule id="Q84XU2-1"/>
    <property type="protein sequence ID" value="AT2G42810.2"/>
    <property type="gene ID" value="AT2G42810"/>
</dbReference>
<dbReference type="EnsemblPlants" id="AT2G42810.4">
    <molecule id="Q84XU2-2"/>
    <property type="protein sequence ID" value="AT2G42810.4"/>
    <property type="gene ID" value="AT2G42810"/>
</dbReference>
<dbReference type="EnsemblPlants" id="AT2G42810.5">
    <molecule id="Q84XU2-2"/>
    <property type="protein sequence ID" value="AT2G42810.5"/>
    <property type="gene ID" value="AT2G42810"/>
</dbReference>
<dbReference type="GeneID" id="818881"/>
<dbReference type="Gramene" id="AT2G42810.1">
    <molecule id="Q84XU2-2"/>
    <property type="protein sequence ID" value="AT2G42810.1"/>
    <property type="gene ID" value="AT2G42810"/>
</dbReference>
<dbReference type="Gramene" id="AT2G42810.2">
    <molecule id="Q84XU2-1"/>
    <property type="protein sequence ID" value="AT2G42810.2"/>
    <property type="gene ID" value="AT2G42810"/>
</dbReference>
<dbReference type="Gramene" id="AT2G42810.4">
    <molecule id="Q84XU2-2"/>
    <property type="protein sequence ID" value="AT2G42810.4"/>
    <property type="gene ID" value="AT2G42810"/>
</dbReference>
<dbReference type="Gramene" id="AT2G42810.5">
    <molecule id="Q84XU2-2"/>
    <property type="protein sequence ID" value="AT2G42810.5"/>
    <property type="gene ID" value="AT2G42810"/>
</dbReference>
<dbReference type="KEGG" id="ath:AT2G42810"/>
<dbReference type="Araport" id="AT2G42810"/>
<dbReference type="TAIR" id="AT2G42810">
    <property type="gene designation" value="PP5"/>
</dbReference>
<dbReference type="eggNOG" id="KOG0376">
    <property type="taxonomic scope" value="Eukaryota"/>
</dbReference>
<dbReference type="InParanoid" id="Q84XU2"/>
<dbReference type="OMA" id="IHKKYAF"/>
<dbReference type="OrthoDB" id="445564at2759"/>
<dbReference type="PhylomeDB" id="Q84XU2"/>
<dbReference type="PRO" id="PR:Q84XU2"/>
<dbReference type="Proteomes" id="UP000006548">
    <property type="component" value="Chromosome 2"/>
</dbReference>
<dbReference type="ExpressionAtlas" id="Q84XU2">
    <property type="expression patterns" value="baseline and differential"/>
</dbReference>
<dbReference type="GO" id="GO:0005737">
    <property type="term" value="C:cytoplasm"/>
    <property type="evidence" value="ECO:0000314"/>
    <property type="project" value="TAIR"/>
</dbReference>
<dbReference type="GO" id="GO:0005829">
    <property type="term" value="C:cytosol"/>
    <property type="evidence" value="ECO:0007005"/>
    <property type="project" value="TAIR"/>
</dbReference>
<dbReference type="GO" id="GO:0005789">
    <property type="term" value="C:endoplasmic reticulum membrane"/>
    <property type="evidence" value="ECO:0007669"/>
    <property type="project" value="UniProtKB-SubCell"/>
</dbReference>
<dbReference type="GO" id="GO:0005635">
    <property type="term" value="C:nuclear envelope"/>
    <property type="evidence" value="ECO:0000314"/>
    <property type="project" value="TAIR"/>
</dbReference>
<dbReference type="GO" id="GO:0031965">
    <property type="term" value="C:nuclear membrane"/>
    <property type="evidence" value="ECO:0007669"/>
    <property type="project" value="UniProtKB-SubCell"/>
</dbReference>
<dbReference type="GO" id="GO:0016607">
    <property type="term" value="C:nuclear speck"/>
    <property type="evidence" value="ECO:0007669"/>
    <property type="project" value="UniProtKB-SubCell"/>
</dbReference>
<dbReference type="GO" id="GO:0005634">
    <property type="term" value="C:nucleus"/>
    <property type="evidence" value="ECO:0000314"/>
    <property type="project" value="TAIR"/>
</dbReference>
<dbReference type="GO" id="GO:0009506">
    <property type="term" value="C:plasmodesma"/>
    <property type="evidence" value="ECO:0007005"/>
    <property type="project" value="TAIR"/>
</dbReference>
<dbReference type="GO" id="GO:0046872">
    <property type="term" value="F:metal ion binding"/>
    <property type="evidence" value="ECO:0007669"/>
    <property type="project" value="UniProtKB-KW"/>
</dbReference>
<dbReference type="GO" id="GO:0004721">
    <property type="term" value="F:phosphoprotein phosphatase activity"/>
    <property type="evidence" value="ECO:0000314"/>
    <property type="project" value="TAIR"/>
</dbReference>
<dbReference type="GO" id="GO:0004722">
    <property type="term" value="F:protein serine/threonine phosphatase activity"/>
    <property type="evidence" value="ECO:0000250"/>
    <property type="project" value="TAIR"/>
</dbReference>
<dbReference type="GO" id="GO:0046906">
    <property type="term" value="F:tetrapyrrole binding"/>
    <property type="evidence" value="ECO:0000314"/>
    <property type="project" value="TAIR"/>
</dbReference>
<dbReference type="GO" id="GO:0010019">
    <property type="term" value="P:chloroplast-nucleus signaling pathway"/>
    <property type="evidence" value="ECO:0000316"/>
    <property type="project" value="TAIR"/>
</dbReference>
<dbReference type="GO" id="GO:1902325">
    <property type="term" value="P:negative regulation of chlorophyll biosynthetic process"/>
    <property type="evidence" value="ECO:0000315"/>
    <property type="project" value="TAIR"/>
</dbReference>
<dbReference type="GO" id="GO:0006913">
    <property type="term" value="P:nucleocytoplasmic transport"/>
    <property type="evidence" value="ECO:0000250"/>
    <property type="project" value="TAIR"/>
</dbReference>
<dbReference type="GO" id="GO:0010017">
    <property type="term" value="P:red or far-red light signaling pathway"/>
    <property type="evidence" value="ECO:0000315"/>
    <property type="project" value="TAIR"/>
</dbReference>
<dbReference type="CDD" id="cd07417">
    <property type="entry name" value="MPP_PP5_C"/>
    <property type="match status" value="1"/>
</dbReference>
<dbReference type="FunFam" id="1.25.40.10:FF:000292">
    <property type="entry name" value="Serine/threonine-protein phosphatase 5"/>
    <property type="match status" value="1"/>
</dbReference>
<dbReference type="FunFam" id="3.60.21.10:FF:000021">
    <property type="entry name" value="Serine/threonine-protein phosphatase 5"/>
    <property type="match status" value="1"/>
</dbReference>
<dbReference type="Gene3D" id="3.60.21.10">
    <property type="match status" value="1"/>
</dbReference>
<dbReference type="Gene3D" id="1.25.40.10">
    <property type="entry name" value="Tetratricopeptide repeat domain"/>
    <property type="match status" value="1"/>
</dbReference>
<dbReference type="InterPro" id="IPR004843">
    <property type="entry name" value="Calcineurin-like_PHP_ApaH"/>
</dbReference>
<dbReference type="InterPro" id="IPR029052">
    <property type="entry name" value="Metallo-depent_PP-like"/>
</dbReference>
<dbReference type="InterPro" id="IPR041753">
    <property type="entry name" value="PP5_C"/>
</dbReference>
<dbReference type="InterPro" id="IPR013235">
    <property type="entry name" value="PPP_dom"/>
</dbReference>
<dbReference type="InterPro" id="IPR051134">
    <property type="entry name" value="PPP_phosphatase"/>
</dbReference>
<dbReference type="InterPro" id="IPR006186">
    <property type="entry name" value="Ser/Thr-sp_prot-phosphatase"/>
</dbReference>
<dbReference type="InterPro" id="IPR011990">
    <property type="entry name" value="TPR-like_helical_dom_sf"/>
</dbReference>
<dbReference type="InterPro" id="IPR019734">
    <property type="entry name" value="TPR_rpt"/>
</dbReference>
<dbReference type="PANTHER" id="PTHR45668">
    <property type="entry name" value="SERINE/THREONINE-PROTEIN PHOSPHATASE 5-RELATED"/>
    <property type="match status" value="1"/>
</dbReference>
<dbReference type="PANTHER" id="PTHR45668:SF5">
    <property type="entry name" value="SERINE_THREONINE-PROTEIN PHOSPHATASE 5"/>
    <property type="match status" value="1"/>
</dbReference>
<dbReference type="Pfam" id="PF00149">
    <property type="entry name" value="Metallophos"/>
    <property type="match status" value="1"/>
</dbReference>
<dbReference type="Pfam" id="PF08321">
    <property type="entry name" value="PPP5"/>
    <property type="match status" value="1"/>
</dbReference>
<dbReference type="Pfam" id="PF00515">
    <property type="entry name" value="TPR_1"/>
    <property type="match status" value="1"/>
</dbReference>
<dbReference type="PIRSF" id="PIRSF033096">
    <property type="entry name" value="PPPtase_5"/>
    <property type="match status" value="1"/>
</dbReference>
<dbReference type="PRINTS" id="PR00114">
    <property type="entry name" value="STPHPHTASE"/>
</dbReference>
<dbReference type="SMART" id="SM00156">
    <property type="entry name" value="PP2Ac"/>
    <property type="match status" value="1"/>
</dbReference>
<dbReference type="SMART" id="SM00028">
    <property type="entry name" value="TPR"/>
    <property type="match status" value="3"/>
</dbReference>
<dbReference type="SUPFAM" id="SSF56300">
    <property type="entry name" value="Metallo-dependent phosphatases"/>
    <property type="match status" value="1"/>
</dbReference>
<dbReference type="SUPFAM" id="SSF48452">
    <property type="entry name" value="TPR-like"/>
    <property type="match status" value="1"/>
</dbReference>
<dbReference type="PROSITE" id="PS50005">
    <property type="entry name" value="TPR"/>
    <property type="match status" value="3"/>
</dbReference>
<dbReference type="PROSITE" id="PS50293">
    <property type="entry name" value="TPR_REGION"/>
    <property type="match status" value="1"/>
</dbReference>
<keyword id="KW-0002">3D-structure</keyword>
<keyword id="KW-0025">Alternative splicing</keyword>
<keyword id="KW-0963">Cytoplasm</keyword>
<keyword id="KW-0256">Endoplasmic reticulum</keyword>
<keyword id="KW-0378">Hydrolase</keyword>
<keyword id="KW-0464">Manganese</keyword>
<keyword id="KW-0472">Membrane</keyword>
<keyword id="KW-0479">Metal-binding</keyword>
<keyword id="KW-0539">Nucleus</keyword>
<keyword id="KW-0904">Protein phosphatase</keyword>
<keyword id="KW-1185">Reference proteome</keyword>
<keyword id="KW-0677">Repeat</keyword>
<keyword id="KW-0802">TPR repeat</keyword>
<keyword id="KW-0812">Transmembrane</keyword>
<keyword id="KW-1133">Transmembrane helix</keyword>
<reference key="1">
    <citation type="journal article" date="2003" name="Plant Physiol.">
        <title>The subcellular localization of plant protein phosphatase 5 isoforms is determined by alternative splicing.</title>
        <authorList>
            <person name="de la Fuente van Bentem S."/>
            <person name="Vossen J.H."/>
            <person name="Vermeer J.E.M."/>
            <person name="de Vroomen M.J."/>
            <person name="Gadella T.W.J. Jr."/>
            <person name="Haring M.A."/>
            <person name="Cornelissen B.J.C."/>
        </authorList>
    </citation>
    <scope>NUCLEOTIDE SEQUENCE [MRNA] (ISOFORM 1)</scope>
    <scope>ALTERNATIVE PRODUCTS</scope>
</reference>
<reference key="2">
    <citation type="journal article" date="1999" name="Nature">
        <title>Sequence and analysis of chromosome 2 of the plant Arabidopsis thaliana.</title>
        <authorList>
            <person name="Lin X."/>
            <person name="Kaul S."/>
            <person name="Rounsley S.D."/>
            <person name="Shea T.P."/>
            <person name="Benito M.-I."/>
            <person name="Town C.D."/>
            <person name="Fujii C.Y."/>
            <person name="Mason T.M."/>
            <person name="Bowman C.L."/>
            <person name="Barnstead M.E."/>
            <person name="Feldblyum T.V."/>
            <person name="Buell C.R."/>
            <person name="Ketchum K.A."/>
            <person name="Lee J.J."/>
            <person name="Ronning C.M."/>
            <person name="Koo H.L."/>
            <person name="Moffat K.S."/>
            <person name="Cronin L.A."/>
            <person name="Shen M."/>
            <person name="Pai G."/>
            <person name="Van Aken S."/>
            <person name="Umayam L."/>
            <person name="Tallon L.J."/>
            <person name="Gill J.E."/>
            <person name="Adams M.D."/>
            <person name="Carrera A.J."/>
            <person name="Creasy T.H."/>
            <person name="Goodman H.M."/>
            <person name="Somerville C.R."/>
            <person name="Copenhaver G.P."/>
            <person name="Preuss D."/>
            <person name="Nierman W.C."/>
            <person name="White O."/>
            <person name="Eisen J.A."/>
            <person name="Salzberg S.L."/>
            <person name="Fraser C.M."/>
            <person name="Venter J.C."/>
        </authorList>
    </citation>
    <scope>NUCLEOTIDE SEQUENCE [LARGE SCALE GENOMIC DNA]</scope>
    <source>
        <strain>cv. Columbia</strain>
    </source>
</reference>
<reference key="3">
    <citation type="journal article" date="2017" name="Plant J.">
        <title>Araport11: a complete reannotation of the Arabidopsis thaliana reference genome.</title>
        <authorList>
            <person name="Cheng C.Y."/>
            <person name="Krishnakumar V."/>
            <person name="Chan A.P."/>
            <person name="Thibaud-Nissen F."/>
            <person name="Schobel S."/>
            <person name="Town C.D."/>
        </authorList>
    </citation>
    <scope>GENOME REANNOTATION</scope>
    <source>
        <strain>cv. Columbia</strain>
    </source>
</reference>
<reference key="4">
    <citation type="journal article" date="2003" name="Science">
        <title>Empirical analysis of transcriptional activity in the Arabidopsis genome.</title>
        <authorList>
            <person name="Yamada K."/>
            <person name="Lim J."/>
            <person name="Dale J.M."/>
            <person name="Chen H."/>
            <person name="Shinn P."/>
            <person name="Palm C.J."/>
            <person name="Southwick A.M."/>
            <person name="Wu H.C."/>
            <person name="Kim C.J."/>
            <person name="Nguyen M."/>
            <person name="Pham P.K."/>
            <person name="Cheuk R.F."/>
            <person name="Karlin-Newmann G."/>
            <person name="Liu S.X."/>
            <person name="Lam B."/>
            <person name="Sakano H."/>
            <person name="Wu T."/>
            <person name="Yu G."/>
            <person name="Miranda M."/>
            <person name="Quach H.L."/>
            <person name="Tripp M."/>
            <person name="Chang C.H."/>
            <person name="Lee J.M."/>
            <person name="Toriumi M.J."/>
            <person name="Chan M.M."/>
            <person name="Tang C.C."/>
            <person name="Onodera C.S."/>
            <person name="Deng J.M."/>
            <person name="Akiyama K."/>
            <person name="Ansari Y."/>
            <person name="Arakawa T."/>
            <person name="Banh J."/>
            <person name="Banno F."/>
            <person name="Bowser L."/>
            <person name="Brooks S.Y."/>
            <person name="Carninci P."/>
            <person name="Chao Q."/>
            <person name="Choy N."/>
            <person name="Enju A."/>
            <person name="Goldsmith A.D."/>
            <person name="Gurjal M."/>
            <person name="Hansen N.F."/>
            <person name="Hayashizaki Y."/>
            <person name="Johnson-Hopson C."/>
            <person name="Hsuan V.W."/>
            <person name="Iida K."/>
            <person name="Karnes M."/>
            <person name="Khan S."/>
            <person name="Koesema E."/>
            <person name="Ishida J."/>
            <person name="Jiang P.X."/>
            <person name="Jones T."/>
            <person name="Kawai J."/>
            <person name="Kamiya A."/>
            <person name="Meyers C."/>
            <person name="Nakajima M."/>
            <person name="Narusaka M."/>
            <person name="Seki M."/>
            <person name="Sakurai T."/>
            <person name="Satou M."/>
            <person name="Tamse R."/>
            <person name="Vaysberg M."/>
            <person name="Wallender E.K."/>
            <person name="Wong C."/>
            <person name="Yamamura Y."/>
            <person name="Yuan S."/>
            <person name="Shinozaki K."/>
            <person name="Davis R.W."/>
            <person name="Theologis A."/>
            <person name="Ecker J.R."/>
        </authorList>
    </citation>
    <scope>NUCLEOTIDE SEQUENCE [LARGE SCALE MRNA] (ISOFORM 2)</scope>
    <source>
        <strain>cv. Columbia</strain>
    </source>
</reference>
<reference key="5">
    <citation type="submission" date="2005-03" db="EMBL/GenBank/DDBJ databases">
        <title>Large-scale analysis of RIKEN Arabidopsis full-length (RAFL) cDNAs.</title>
        <authorList>
            <person name="Totoki Y."/>
            <person name="Seki M."/>
            <person name="Ishida J."/>
            <person name="Nakajima M."/>
            <person name="Enju A."/>
            <person name="Kamiya A."/>
            <person name="Narusaka M."/>
            <person name="Shin-i T."/>
            <person name="Nakagawa M."/>
            <person name="Sakamoto N."/>
            <person name="Oishi K."/>
            <person name="Kohara Y."/>
            <person name="Kobayashi M."/>
            <person name="Toyoda A."/>
            <person name="Sakaki Y."/>
            <person name="Sakurai T."/>
            <person name="Iida K."/>
            <person name="Akiyama K."/>
            <person name="Satou M."/>
            <person name="Toyoda T."/>
            <person name="Konagaya A."/>
            <person name="Carninci P."/>
            <person name="Kawai J."/>
            <person name="Hayashizaki Y."/>
            <person name="Shinozaki K."/>
        </authorList>
    </citation>
    <scope>NUCLEOTIDE SEQUENCE [LARGE SCALE MRNA] OF 424-538 (ISOFORMS 1 AND 2)</scope>
    <source>
        <strain>cv. Columbia</strain>
    </source>
</reference>
<reference key="6">
    <citation type="journal article" date="2005" name="Cell">
        <title>Phy tunes: phosphorylation status and phytochrome-mediated signaling.</title>
        <authorList>
            <person name="Rubio V."/>
            <person name="Deng X.W."/>
        </authorList>
    </citation>
    <scope>REVIEW</scope>
</reference>
<reference key="7">
    <citation type="journal article" date="2005" name="Cell">
        <title>Phytochrome-specific type 5 phosphatase controls light signal flux by enhancing phytochrome stability and affinity for a signal transducer.</title>
        <authorList>
            <person name="Ryu J.S."/>
            <person name="Kim J.-I."/>
            <person name="Kunkel T."/>
            <person name="Kim B.C."/>
            <person name="Cho D.S."/>
            <person name="Hong S.H."/>
            <person name="Kim S.-H."/>
            <person name="Fernandez A.P."/>
            <person name="Kim Y."/>
            <person name="Alonso J.M."/>
            <person name="Ecker J.R."/>
            <person name="Nagy F."/>
            <person name="Lim P.O."/>
            <person name="Song P.-S."/>
            <person name="Schaefer E."/>
            <person name="Nam H.G."/>
        </authorList>
    </citation>
    <scope>FUNCTION</scope>
    <scope>SUBCELLULAR LOCATION</scope>
    <scope>BIOPHYSICOCHEMICAL PROPERTIES</scope>
    <scope>ACTIVATION BY ARACHIDONIC ACID</scope>
    <scope>INTERACTION WITH PHYA AND PHYB</scope>
</reference>
<reference key="8">
    <citation type="journal article" date="2007" name="Trends Plant Sci.">
        <title>Arabidopsis PPP family of serine/threonine phosphatases.</title>
        <authorList>
            <person name="Farkas I."/>
            <person name="Dombradi V."/>
            <person name="Miskei M."/>
            <person name="Szabados L."/>
            <person name="Koncz C."/>
        </authorList>
    </citation>
    <scope>GENE FAMILY</scope>
    <scope>NOMENCLATURE</scope>
</reference>
<organism>
    <name type="scientific">Arabidopsis thaliana</name>
    <name type="common">Mouse-ear cress</name>
    <dbReference type="NCBI Taxonomy" id="3702"/>
    <lineage>
        <taxon>Eukaryota</taxon>
        <taxon>Viridiplantae</taxon>
        <taxon>Streptophyta</taxon>
        <taxon>Embryophyta</taxon>
        <taxon>Tracheophyta</taxon>
        <taxon>Spermatophyta</taxon>
        <taxon>Magnoliopsida</taxon>
        <taxon>eudicotyledons</taxon>
        <taxon>Gunneridae</taxon>
        <taxon>Pentapetalae</taxon>
        <taxon>rosids</taxon>
        <taxon>malvids</taxon>
        <taxon>Brassicales</taxon>
        <taxon>Brassicaceae</taxon>
        <taxon>Camelineae</taxon>
        <taxon>Arabidopsis</taxon>
    </lineage>
</organism>
<comment type="function">
    <text evidence="3">Isoform 2 dephosphorylates phosphorylated phytochromes, with a preference toward Pfr forms, and enhances phytochrome-mediated photoresponses, probably by enhancing their stability and their binding affinity for light signal transducers such as NDPK2. Can use para-nitrophenylphosphate (pNPP) as substrate.</text>
</comment>
<comment type="catalytic activity">
    <reaction>
        <text>O-phospho-L-seryl-[protein] + H2O = L-seryl-[protein] + phosphate</text>
        <dbReference type="Rhea" id="RHEA:20629"/>
        <dbReference type="Rhea" id="RHEA-COMP:9863"/>
        <dbReference type="Rhea" id="RHEA-COMP:11604"/>
        <dbReference type="ChEBI" id="CHEBI:15377"/>
        <dbReference type="ChEBI" id="CHEBI:29999"/>
        <dbReference type="ChEBI" id="CHEBI:43474"/>
        <dbReference type="ChEBI" id="CHEBI:83421"/>
        <dbReference type="EC" id="3.1.3.16"/>
    </reaction>
</comment>
<comment type="catalytic activity">
    <reaction>
        <text>O-phospho-L-threonyl-[protein] + H2O = L-threonyl-[protein] + phosphate</text>
        <dbReference type="Rhea" id="RHEA:47004"/>
        <dbReference type="Rhea" id="RHEA-COMP:11060"/>
        <dbReference type="Rhea" id="RHEA-COMP:11605"/>
        <dbReference type="ChEBI" id="CHEBI:15377"/>
        <dbReference type="ChEBI" id="CHEBI:30013"/>
        <dbReference type="ChEBI" id="CHEBI:43474"/>
        <dbReference type="ChEBI" id="CHEBI:61977"/>
        <dbReference type="EC" id="3.1.3.16"/>
    </reaction>
</comment>
<comment type="cofactor">
    <cofactor evidence="1">
        <name>Mn(2+)</name>
        <dbReference type="ChEBI" id="CHEBI:29035"/>
    </cofactor>
    <text evidence="1">Binds 2 manganese ions per subunit.</text>
</comment>
<comment type="activity regulation">
    <text>Activated by arachidonic acid (AA).</text>
</comment>
<comment type="biophysicochemical properties">
    <kinetics>
        <KM evidence="3">160 mM for pNPP (at pH 7.5 and 30 degrees Celsius)</KM>
        <Vmax evidence="3">22.0 umol/min/mg enzyme with pNPP as substrate (at pH 7.5 and 30 degrees Celsius)</Vmax>
        <text>Experiments have been done in the presence of 100 uM arachidonic acid (AA).</text>
    </kinetics>
</comment>
<comment type="subunit">
    <text evidence="3">Interacts with PHYA and PHYB, mostly when they are phosphorylated and in Pfr forms.</text>
</comment>
<comment type="interaction">
    <interactant intactId="EBI-4445012">
        <id>Q84XU2</id>
    </interactant>
    <interactant intactId="EBI-7498167">
        <id>D6RUV9</id>
        <label>AGO1</label>
    </interactant>
    <organismsDiffer>true</organismsDiffer>
    <experiments>2</experiments>
</comment>
<comment type="subcellular location">
    <molecule>Isoform 1</molecule>
    <subcellularLocation>
        <location>Endoplasmic reticulum membrane</location>
        <topology>Multi-pass membrane protein</topology>
    </subcellularLocation>
    <subcellularLocation>
        <location evidence="1">Nucleus membrane</location>
        <topology evidence="1">Multi-pass membrane protein</topology>
    </subcellularLocation>
</comment>
<comment type="subcellular location">
    <molecule>Isoform 2</molecule>
    <subcellularLocation>
        <location>Cytoplasm</location>
    </subcellularLocation>
    <subcellularLocation>
        <location>Nucleus</location>
        <location>Nucleoplasm</location>
    </subcellularLocation>
    <subcellularLocation>
        <location>Nucleus speckle</location>
    </subcellularLocation>
    <text>Cytoplasmic in darkness, but translocated to the nucleus upon illumination, when associated with phytochromes into speckles.</text>
</comment>
<comment type="alternative products">
    <event type="alternative splicing"/>
    <isoform>
        <id>Q84XU2-1</id>
        <name>1</name>
        <sequence type="displayed"/>
    </isoform>
    <isoform>
        <id>Q84XU2-2</id>
        <name>2</name>
        <sequence type="described" ref="VSP_029087"/>
    </isoform>
</comment>
<comment type="domain">
    <text>TPR repeats are required for the binding with phytochromes.</text>
</comment>
<comment type="miscellaneous">
    <molecule>Isoform 2</molecule>
    <text evidence="6">Partial isoform 2 lacking TPR repeats exhibits enhanced activity at pH 7.5 with pNPP as substrate. This partial protein is in addition inhibited by okadaic acid.</text>
</comment>
<comment type="similarity">
    <text evidence="6">Belongs to the PPP phosphatase family. PP-5 (PP-T) subfamily.</text>
</comment>
<accession>Q84XU2</accession>
<accession>Q56X87</accession>
<accession>Q8RXU0</accession>
<accession>Q8W581</accession>
<accession>Q9SJH5</accession>
<protein>
    <recommendedName>
        <fullName>Serine/threonine-protein phosphatase 5</fullName>
        <ecNumber>3.1.3.16</ecNumber>
    </recommendedName>
</protein>
<sequence length="538" mass="60283">METKNENSDVSRAEEFKSQANEAFKGHKYSSAIDLYTKAIELNSNNAVYWANRAFAHTKLEEYGSAIQDASKAIEVDSRYSKGYYRRGAAYLAMGKFKDALKDFQQVKRLSPNDPDATRKLKECEKAVMKLKFEEAISVPVSERRSVAESIDFHTIGNKPRSSSMPTKTALAAVVAAVMVVAVRGFATTEILMVLVSVVLGTFWWGSFSGKVEPQYSGARIEGEEVTLDFVKTMMEDFKNQKTLHKRYAYQIVLQTRQILLALPSLVDISVPHGKHITVCGDVHGQFYDLLNIFELNGLPSEENPYLFNGDFVDRGSFSVEIILTLFAFKCMCPSSIYLARGNHESKSMNKIYGFEGEVRSKLSEKFVDLFAEVFCYLPLAHVINGKVFVVHGGLFSVDGVKLSDIRAIDRFCEPPEEGLMCELLWSDPQPLPGRGPSKRGVGLSFGGDVTKRFLQDNNLDLLVRSHEVKDEGYEVEHDGKLITVFSAPNYCDQMGNKGAFIRFEAPDMKPNIVTFSAVPHPDVKPMAYANNFLRMFN</sequence>
<gene>
    <name type="primary">PAPP5</name>
    <name type="synonym">PP5</name>
    <name type="ordered locus">At2g42810</name>
    <name type="ORF">F7D19.19</name>
</gene>